<proteinExistence type="inferred from homology"/>
<organism>
    <name type="scientific">Shewanella loihica (strain ATCC BAA-1088 / PV-4)</name>
    <dbReference type="NCBI Taxonomy" id="323850"/>
    <lineage>
        <taxon>Bacteria</taxon>
        <taxon>Pseudomonadati</taxon>
        <taxon>Pseudomonadota</taxon>
        <taxon>Gammaproteobacteria</taxon>
        <taxon>Alteromonadales</taxon>
        <taxon>Shewanellaceae</taxon>
        <taxon>Shewanella</taxon>
    </lineage>
</organism>
<reference key="1">
    <citation type="submission" date="2007-03" db="EMBL/GenBank/DDBJ databases">
        <title>Complete sequence of Shewanella loihica PV-4.</title>
        <authorList>
            <consortium name="US DOE Joint Genome Institute"/>
            <person name="Copeland A."/>
            <person name="Lucas S."/>
            <person name="Lapidus A."/>
            <person name="Barry K."/>
            <person name="Detter J.C."/>
            <person name="Glavina del Rio T."/>
            <person name="Hammon N."/>
            <person name="Israni S."/>
            <person name="Dalin E."/>
            <person name="Tice H."/>
            <person name="Pitluck S."/>
            <person name="Chain P."/>
            <person name="Malfatti S."/>
            <person name="Shin M."/>
            <person name="Vergez L."/>
            <person name="Schmutz J."/>
            <person name="Larimer F."/>
            <person name="Land M."/>
            <person name="Hauser L."/>
            <person name="Kyrpides N."/>
            <person name="Mikhailova N."/>
            <person name="Romine M.F."/>
            <person name="Serres G."/>
            <person name="Fredrickson J."/>
            <person name="Tiedje J."/>
            <person name="Richardson P."/>
        </authorList>
    </citation>
    <scope>NUCLEOTIDE SEQUENCE [LARGE SCALE GENOMIC DNA]</scope>
    <source>
        <strain>ATCC BAA-1088 / PV-4</strain>
    </source>
</reference>
<gene>
    <name evidence="1" type="primary">glsA</name>
    <name type="ordered locus">Shew_1126</name>
</gene>
<accession>A3QBZ9</accession>
<protein>
    <recommendedName>
        <fullName evidence="1">Glutaminase</fullName>
        <ecNumber evidence="1">3.5.1.2</ecNumber>
    </recommendedName>
</protein>
<feature type="chain" id="PRO_1000048358" description="Glutaminase">
    <location>
        <begin position="1"/>
        <end position="304"/>
    </location>
</feature>
<feature type="binding site" evidence="1">
    <location>
        <position position="63"/>
    </location>
    <ligand>
        <name>substrate</name>
    </ligand>
</feature>
<feature type="binding site" evidence="1">
    <location>
        <position position="114"/>
    </location>
    <ligand>
        <name>substrate</name>
    </ligand>
</feature>
<feature type="binding site" evidence="1">
    <location>
        <position position="158"/>
    </location>
    <ligand>
        <name>substrate</name>
    </ligand>
</feature>
<feature type="binding site" evidence="1">
    <location>
        <position position="165"/>
    </location>
    <ligand>
        <name>substrate</name>
    </ligand>
</feature>
<feature type="binding site" evidence="1">
    <location>
        <position position="189"/>
    </location>
    <ligand>
        <name>substrate</name>
    </ligand>
</feature>
<feature type="binding site" evidence="1">
    <location>
        <position position="240"/>
    </location>
    <ligand>
        <name>substrate</name>
    </ligand>
</feature>
<feature type="binding site" evidence="1">
    <location>
        <position position="258"/>
    </location>
    <ligand>
        <name>substrate</name>
    </ligand>
</feature>
<name>GLSA_SHELP</name>
<evidence type="ECO:0000255" key="1">
    <source>
        <dbReference type="HAMAP-Rule" id="MF_00313"/>
    </source>
</evidence>
<sequence>MPQKDLLETIIEQVRPLLGKGKVADYIPALAEVDPTKLGIAVTTIDGQTIGAGDYLEPFSIQSISKVFSLTVALTLYEEAEIWSRVGKEPSGQSFNSLVQIELERGVPRNPFINAGALIIADLLQSRLGAPKHRMLEVVRKLSANPHVIYDKRVAASEYEHSARNAAIAYLMKSFGNFNNDVDRVLRNYFHYCALKMSCADLSKAMLYLANRGQSLSAEQVVSPIQTRKLNALLATSGLYDGAGEFAYRVGMPGKSGVGGGIIAVIPGDMSICVWSPELDKNGNSLAGTAALEKLSQALGRSIF</sequence>
<keyword id="KW-0378">Hydrolase</keyword>
<keyword id="KW-1185">Reference proteome</keyword>
<comment type="catalytic activity">
    <reaction evidence="1">
        <text>L-glutamine + H2O = L-glutamate + NH4(+)</text>
        <dbReference type="Rhea" id="RHEA:15889"/>
        <dbReference type="ChEBI" id="CHEBI:15377"/>
        <dbReference type="ChEBI" id="CHEBI:28938"/>
        <dbReference type="ChEBI" id="CHEBI:29985"/>
        <dbReference type="ChEBI" id="CHEBI:58359"/>
        <dbReference type="EC" id="3.5.1.2"/>
    </reaction>
</comment>
<comment type="subunit">
    <text evidence="1">Homotetramer.</text>
</comment>
<comment type="similarity">
    <text evidence="1">Belongs to the glutaminase family.</text>
</comment>
<dbReference type="EC" id="3.5.1.2" evidence="1"/>
<dbReference type="EMBL" id="CP000606">
    <property type="protein sequence ID" value="ABO22997.1"/>
    <property type="molecule type" value="Genomic_DNA"/>
</dbReference>
<dbReference type="RefSeq" id="WP_011864930.1">
    <property type="nucleotide sequence ID" value="NC_009092.1"/>
</dbReference>
<dbReference type="SMR" id="A3QBZ9"/>
<dbReference type="STRING" id="323850.Shew_1126"/>
<dbReference type="KEGG" id="slo:Shew_1126"/>
<dbReference type="eggNOG" id="COG2066">
    <property type="taxonomic scope" value="Bacteria"/>
</dbReference>
<dbReference type="HOGENOM" id="CLU_027932_1_1_6"/>
<dbReference type="OrthoDB" id="9788822at2"/>
<dbReference type="Proteomes" id="UP000001558">
    <property type="component" value="Chromosome"/>
</dbReference>
<dbReference type="GO" id="GO:0004359">
    <property type="term" value="F:glutaminase activity"/>
    <property type="evidence" value="ECO:0007669"/>
    <property type="project" value="UniProtKB-UniRule"/>
</dbReference>
<dbReference type="GO" id="GO:0006537">
    <property type="term" value="P:glutamate biosynthetic process"/>
    <property type="evidence" value="ECO:0007669"/>
    <property type="project" value="TreeGrafter"/>
</dbReference>
<dbReference type="GO" id="GO:0006543">
    <property type="term" value="P:glutamine catabolic process"/>
    <property type="evidence" value="ECO:0007669"/>
    <property type="project" value="TreeGrafter"/>
</dbReference>
<dbReference type="FunFam" id="3.40.710.10:FF:000005">
    <property type="entry name" value="Glutaminase"/>
    <property type="match status" value="1"/>
</dbReference>
<dbReference type="Gene3D" id="3.40.710.10">
    <property type="entry name" value="DD-peptidase/beta-lactamase superfamily"/>
    <property type="match status" value="1"/>
</dbReference>
<dbReference type="HAMAP" id="MF_00313">
    <property type="entry name" value="Glutaminase"/>
    <property type="match status" value="1"/>
</dbReference>
<dbReference type="InterPro" id="IPR012338">
    <property type="entry name" value="Beta-lactam/transpept-like"/>
</dbReference>
<dbReference type="InterPro" id="IPR015868">
    <property type="entry name" value="Glutaminase"/>
</dbReference>
<dbReference type="NCBIfam" id="TIGR03814">
    <property type="entry name" value="Gln_ase"/>
    <property type="match status" value="1"/>
</dbReference>
<dbReference type="NCBIfam" id="NF002132">
    <property type="entry name" value="PRK00971.1-1"/>
    <property type="match status" value="1"/>
</dbReference>
<dbReference type="NCBIfam" id="NF002133">
    <property type="entry name" value="PRK00971.1-2"/>
    <property type="match status" value="1"/>
</dbReference>
<dbReference type="PANTHER" id="PTHR12544">
    <property type="entry name" value="GLUTAMINASE"/>
    <property type="match status" value="1"/>
</dbReference>
<dbReference type="PANTHER" id="PTHR12544:SF29">
    <property type="entry name" value="GLUTAMINASE"/>
    <property type="match status" value="1"/>
</dbReference>
<dbReference type="Pfam" id="PF04960">
    <property type="entry name" value="Glutaminase"/>
    <property type="match status" value="1"/>
</dbReference>
<dbReference type="SUPFAM" id="SSF56601">
    <property type="entry name" value="beta-lactamase/transpeptidase-like"/>
    <property type="match status" value="1"/>
</dbReference>